<keyword id="KW-0414">Isoprene biosynthesis</keyword>
<keyword id="KW-0460">Magnesium</keyword>
<keyword id="KW-0479">Metal-binding</keyword>
<keyword id="KW-1185">Reference proteome</keyword>
<keyword id="KW-0784">Thiamine biosynthesis</keyword>
<keyword id="KW-0786">Thiamine pyrophosphate</keyword>
<keyword id="KW-0808">Transferase</keyword>
<evidence type="ECO:0000255" key="1">
    <source>
        <dbReference type="HAMAP-Rule" id="MF_00315"/>
    </source>
</evidence>
<gene>
    <name evidence="1" type="primary">dxs</name>
    <name type="ordered locus">FTT_1018c</name>
</gene>
<name>DXS_FRATT</name>
<accession>Q5NG39</accession>
<proteinExistence type="inferred from homology"/>
<sequence length="615" mass="67342">MSKYTILDKINTPSDLKLIPESQLKILSAELRAFLVDTLDVSGGHFASSLGATELTVALHYVYNAPYDNIVWDVGHQTYIHKILTGRKDKLVTIKKDGGISGFPKRSESEYDTFGVGHSSTSISAALGMAIADRLQGKSSNTVAVIGDGAITGGMAFEALNHAGGIKEDILVILNDNEMSISDNVGGLSAHFSKIISGGFYNSIREKGKEVLKNIPPIFEFVKKVETQTKGMFVPANFFEDLGFYYVGPIDGHDVTELVKTLRILKDHKGPKLLHVITKKGKGYTKAESDPIKFHHVAPSFHSGENITTKISKPTYSNIFGDWICQKAAKDKRLVGITPAMKEGSDLIRFSQLYPHRYFDVAIAEQHAVTFAGGLACQGLKPVVAIYSTFLQRAYDQVIHDIALQNLDVLYAVDRAGLVGADGATHDGSFDLAFMRCIPNHVIMTPSDENEAYHMLEFGYEYNGPAMVRYPRGAGIGAEITGSLDLELGKAKIVKQGSKIAILNFGTLLPLAKQLAEKYHATVIDMRFVKPLDEIMLDKVSQTHEIILTLEENCIAGGAGSAVNEYFVAKDLSNKIIVRNFGLQDKFLNHGTKDLLLAQSKLCVENISQELDKLI</sequence>
<feature type="chain" id="PRO_0000256420" description="1-deoxy-D-xylulose-5-phosphate synthase">
    <location>
        <begin position="1"/>
        <end position="615"/>
    </location>
</feature>
<feature type="binding site" evidence="1">
    <location>
        <position position="76"/>
    </location>
    <ligand>
        <name>thiamine diphosphate</name>
        <dbReference type="ChEBI" id="CHEBI:58937"/>
    </ligand>
</feature>
<feature type="binding site" evidence="1">
    <location>
        <begin position="117"/>
        <end position="119"/>
    </location>
    <ligand>
        <name>thiamine diphosphate</name>
        <dbReference type="ChEBI" id="CHEBI:58937"/>
    </ligand>
</feature>
<feature type="binding site" evidence="1">
    <location>
        <position position="148"/>
    </location>
    <ligand>
        <name>Mg(2+)</name>
        <dbReference type="ChEBI" id="CHEBI:18420"/>
    </ligand>
</feature>
<feature type="binding site" evidence="1">
    <location>
        <begin position="149"/>
        <end position="150"/>
    </location>
    <ligand>
        <name>thiamine diphosphate</name>
        <dbReference type="ChEBI" id="CHEBI:58937"/>
    </ligand>
</feature>
<feature type="binding site" evidence="1">
    <location>
        <position position="177"/>
    </location>
    <ligand>
        <name>Mg(2+)</name>
        <dbReference type="ChEBI" id="CHEBI:18420"/>
    </ligand>
</feature>
<feature type="binding site" evidence="1">
    <location>
        <position position="177"/>
    </location>
    <ligand>
        <name>thiamine diphosphate</name>
        <dbReference type="ChEBI" id="CHEBI:58937"/>
    </ligand>
</feature>
<feature type="binding site" evidence="1">
    <location>
        <position position="284"/>
    </location>
    <ligand>
        <name>thiamine diphosphate</name>
        <dbReference type="ChEBI" id="CHEBI:58937"/>
    </ligand>
</feature>
<feature type="binding site" evidence="1">
    <location>
        <position position="365"/>
    </location>
    <ligand>
        <name>thiamine diphosphate</name>
        <dbReference type="ChEBI" id="CHEBI:58937"/>
    </ligand>
</feature>
<organism>
    <name type="scientific">Francisella tularensis subsp. tularensis (strain SCHU S4 / Schu 4)</name>
    <dbReference type="NCBI Taxonomy" id="177416"/>
    <lineage>
        <taxon>Bacteria</taxon>
        <taxon>Pseudomonadati</taxon>
        <taxon>Pseudomonadota</taxon>
        <taxon>Gammaproteobacteria</taxon>
        <taxon>Thiotrichales</taxon>
        <taxon>Francisellaceae</taxon>
        <taxon>Francisella</taxon>
    </lineage>
</organism>
<dbReference type="EC" id="2.2.1.7" evidence="1"/>
<dbReference type="EMBL" id="AJ749949">
    <property type="protein sequence ID" value="CAG45651.1"/>
    <property type="molecule type" value="Genomic_DNA"/>
</dbReference>
<dbReference type="RefSeq" id="WP_003021112.1">
    <property type="nucleotide sequence ID" value="NZ_CP010290.1"/>
</dbReference>
<dbReference type="RefSeq" id="YP_170003.1">
    <property type="nucleotide sequence ID" value="NC_006570.2"/>
</dbReference>
<dbReference type="SMR" id="Q5NG39"/>
<dbReference type="IntAct" id="Q5NG39">
    <property type="interactions" value="1"/>
</dbReference>
<dbReference type="STRING" id="177416.FTT_1018c"/>
<dbReference type="DNASU" id="3191556"/>
<dbReference type="EnsemblBacteria" id="CAG45651">
    <property type="protein sequence ID" value="CAG45651"/>
    <property type="gene ID" value="FTT_1018c"/>
</dbReference>
<dbReference type="KEGG" id="ftu:FTT_1018c"/>
<dbReference type="eggNOG" id="COG1154">
    <property type="taxonomic scope" value="Bacteria"/>
</dbReference>
<dbReference type="OrthoDB" id="9803371at2"/>
<dbReference type="UniPathway" id="UPA00064">
    <property type="reaction ID" value="UER00091"/>
</dbReference>
<dbReference type="Proteomes" id="UP000001174">
    <property type="component" value="Chromosome"/>
</dbReference>
<dbReference type="GO" id="GO:0005829">
    <property type="term" value="C:cytosol"/>
    <property type="evidence" value="ECO:0007669"/>
    <property type="project" value="TreeGrafter"/>
</dbReference>
<dbReference type="GO" id="GO:0008661">
    <property type="term" value="F:1-deoxy-D-xylulose-5-phosphate synthase activity"/>
    <property type="evidence" value="ECO:0007669"/>
    <property type="project" value="UniProtKB-UniRule"/>
</dbReference>
<dbReference type="GO" id="GO:0000287">
    <property type="term" value="F:magnesium ion binding"/>
    <property type="evidence" value="ECO:0007669"/>
    <property type="project" value="UniProtKB-UniRule"/>
</dbReference>
<dbReference type="GO" id="GO:0030976">
    <property type="term" value="F:thiamine pyrophosphate binding"/>
    <property type="evidence" value="ECO:0007669"/>
    <property type="project" value="UniProtKB-UniRule"/>
</dbReference>
<dbReference type="GO" id="GO:0052865">
    <property type="term" value="P:1-deoxy-D-xylulose 5-phosphate biosynthetic process"/>
    <property type="evidence" value="ECO:0007669"/>
    <property type="project" value="UniProtKB-UniPathway"/>
</dbReference>
<dbReference type="GO" id="GO:0019288">
    <property type="term" value="P:isopentenyl diphosphate biosynthetic process, methylerythritol 4-phosphate pathway"/>
    <property type="evidence" value="ECO:0007669"/>
    <property type="project" value="TreeGrafter"/>
</dbReference>
<dbReference type="GO" id="GO:0016114">
    <property type="term" value="P:terpenoid biosynthetic process"/>
    <property type="evidence" value="ECO:0007669"/>
    <property type="project" value="UniProtKB-UniRule"/>
</dbReference>
<dbReference type="GO" id="GO:0009228">
    <property type="term" value="P:thiamine biosynthetic process"/>
    <property type="evidence" value="ECO:0007669"/>
    <property type="project" value="UniProtKB-UniRule"/>
</dbReference>
<dbReference type="CDD" id="cd02007">
    <property type="entry name" value="TPP_DXS"/>
    <property type="match status" value="1"/>
</dbReference>
<dbReference type="CDD" id="cd07033">
    <property type="entry name" value="TPP_PYR_DXS_TK_like"/>
    <property type="match status" value="1"/>
</dbReference>
<dbReference type="FunFam" id="3.40.50.970:FF:000005">
    <property type="entry name" value="1-deoxy-D-xylulose-5-phosphate synthase"/>
    <property type="match status" value="1"/>
</dbReference>
<dbReference type="Gene3D" id="3.40.50.920">
    <property type="match status" value="1"/>
</dbReference>
<dbReference type="Gene3D" id="3.40.50.970">
    <property type="match status" value="2"/>
</dbReference>
<dbReference type="HAMAP" id="MF_00315">
    <property type="entry name" value="DXP_synth"/>
    <property type="match status" value="1"/>
</dbReference>
<dbReference type="InterPro" id="IPR005477">
    <property type="entry name" value="Dxylulose-5-P_synthase"/>
</dbReference>
<dbReference type="InterPro" id="IPR029061">
    <property type="entry name" value="THDP-binding"/>
</dbReference>
<dbReference type="InterPro" id="IPR009014">
    <property type="entry name" value="Transketo_C/PFOR_II"/>
</dbReference>
<dbReference type="InterPro" id="IPR005475">
    <property type="entry name" value="Transketolase-like_Pyr-bd"/>
</dbReference>
<dbReference type="InterPro" id="IPR020826">
    <property type="entry name" value="Transketolase_BS"/>
</dbReference>
<dbReference type="InterPro" id="IPR033248">
    <property type="entry name" value="Transketolase_C"/>
</dbReference>
<dbReference type="InterPro" id="IPR049557">
    <property type="entry name" value="Transketolase_CS"/>
</dbReference>
<dbReference type="NCBIfam" id="TIGR00204">
    <property type="entry name" value="dxs"/>
    <property type="match status" value="1"/>
</dbReference>
<dbReference type="NCBIfam" id="NF003933">
    <property type="entry name" value="PRK05444.2-2"/>
    <property type="match status" value="1"/>
</dbReference>
<dbReference type="PANTHER" id="PTHR43322">
    <property type="entry name" value="1-D-DEOXYXYLULOSE 5-PHOSPHATE SYNTHASE-RELATED"/>
    <property type="match status" value="1"/>
</dbReference>
<dbReference type="PANTHER" id="PTHR43322:SF5">
    <property type="entry name" value="1-DEOXY-D-XYLULOSE-5-PHOSPHATE SYNTHASE, CHLOROPLASTIC"/>
    <property type="match status" value="1"/>
</dbReference>
<dbReference type="Pfam" id="PF13292">
    <property type="entry name" value="DXP_synthase_N"/>
    <property type="match status" value="1"/>
</dbReference>
<dbReference type="Pfam" id="PF02779">
    <property type="entry name" value="Transket_pyr"/>
    <property type="match status" value="1"/>
</dbReference>
<dbReference type="Pfam" id="PF02780">
    <property type="entry name" value="Transketolase_C"/>
    <property type="match status" value="1"/>
</dbReference>
<dbReference type="SMART" id="SM00861">
    <property type="entry name" value="Transket_pyr"/>
    <property type="match status" value="1"/>
</dbReference>
<dbReference type="SUPFAM" id="SSF52518">
    <property type="entry name" value="Thiamin diphosphate-binding fold (THDP-binding)"/>
    <property type="match status" value="2"/>
</dbReference>
<dbReference type="SUPFAM" id="SSF52922">
    <property type="entry name" value="TK C-terminal domain-like"/>
    <property type="match status" value="1"/>
</dbReference>
<dbReference type="PROSITE" id="PS00801">
    <property type="entry name" value="TRANSKETOLASE_1"/>
    <property type="match status" value="1"/>
</dbReference>
<dbReference type="PROSITE" id="PS00802">
    <property type="entry name" value="TRANSKETOLASE_2"/>
    <property type="match status" value="1"/>
</dbReference>
<reference key="1">
    <citation type="journal article" date="2005" name="Nat. Genet.">
        <title>The complete genome sequence of Francisella tularensis, the causative agent of tularemia.</title>
        <authorList>
            <person name="Larsson P."/>
            <person name="Oyston P.C.F."/>
            <person name="Chain P."/>
            <person name="Chu M.C."/>
            <person name="Duffield M."/>
            <person name="Fuxelius H.-H."/>
            <person name="Garcia E."/>
            <person name="Haelltorp G."/>
            <person name="Johansson D."/>
            <person name="Isherwood K.E."/>
            <person name="Karp P.D."/>
            <person name="Larsson E."/>
            <person name="Liu Y."/>
            <person name="Michell S."/>
            <person name="Prior J."/>
            <person name="Prior R."/>
            <person name="Malfatti S."/>
            <person name="Sjoestedt A."/>
            <person name="Svensson K."/>
            <person name="Thompson N."/>
            <person name="Vergez L."/>
            <person name="Wagg J.K."/>
            <person name="Wren B.W."/>
            <person name="Lindler L.E."/>
            <person name="Andersson S.G.E."/>
            <person name="Forsman M."/>
            <person name="Titball R.W."/>
        </authorList>
    </citation>
    <scope>NUCLEOTIDE SEQUENCE [LARGE SCALE GENOMIC DNA]</scope>
    <source>
        <strain>SCHU S4 / Schu 4</strain>
    </source>
</reference>
<protein>
    <recommendedName>
        <fullName evidence="1">1-deoxy-D-xylulose-5-phosphate synthase</fullName>
        <ecNumber evidence="1">2.2.1.7</ecNumber>
    </recommendedName>
    <alternativeName>
        <fullName evidence="1">1-deoxyxylulose-5-phosphate synthase</fullName>
        <shortName evidence="1">DXP synthase</shortName>
        <shortName evidence="1">DXPS</shortName>
    </alternativeName>
</protein>
<comment type="function">
    <text evidence="1">Catalyzes the acyloin condensation reaction between C atoms 2 and 3 of pyruvate and glyceraldehyde 3-phosphate to yield 1-deoxy-D-xylulose-5-phosphate (DXP).</text>
</comment>
<comment type="catalytic activity">
    <reaction evidence="1">
        <text>D-glyceraldehyde 3-phosphate + pyruvate + H(+) = 1-deoxy-D-xylulose 5-phosphate + CO2</text>
        <dbReference type="Rhea" id="RHEA:12605"/>
        <dbReference type="ChEBI" id="CHEBI:15361"/>
        <dbReference type="ChEBI" id="CHEBI:15378"/>
        <dbReference type="ChEBI" id="CHEBI:16526"/>
        <dbReference type="ChEBI" id="CHEBI:57792"/>
        <dbReference type="ChEBI" id="CHEBI:59776"/>
        <dbReference type="EC" id="2.2.1.7"/>
    </reaction>
</comment>
<comment type="cofactor">
    <cofactor evidence="1">
        <name>Mg(2+)</name>
        <dbReference type="ChEBI" id="CHEBI:18420"/>
    </cofactor>
    <text evidence="1">Binds 1 Mg(2+) ion per subunit.</text>
</comment>
<comment type="cofactor">
    <cofactor evidence="1">
        <name>thiamine diphosphate</name>
        <dbReference type="ChEBI" id="CHEBI:58937"/>
    </cofactor>
    <text evidence="1">Binds 1 thiamine pyrophosphate per subunit.</text>
</comment>
<comment type="pathway">
    <text evidence="1">Metabolic intermediate biosynthesis; 1-deoxy-D-xylulose 5-phosphate biosynthesis; 1-deoxy-D-xylulose 5-phosphate from D-glyceraldehyde 3-phosphate and pyruvate: step 1/1.</text>
</comment>
<comment type="subunit">
    <text evidence="1">Homodimer.</text>
</comment>
<comment type="similarity">
    <text evidence="1">Belongs to the transketolase family. DXPS subfamily.</text>
</comment>